<protein>
    <recommendedName>
        <fullName evidence="1">tRNA U34 carboxymethyltransferase</fullName>
        <ecNumber evidence="1">2.5.1.-</ecNumber>
    </recommendedName>
</protein>
<sequence length="323" mass="37007">MIDFGNFYSLIAKNHLSHWLETLPAQIANWQREQQHGLFKQWSNAVEFLPEIKPYRLDLLHSVTAESEEPLSAGQIKRIETLMRNLMPWRKGPFSLYGVNIDTEWRSDWKWDRVLPHLSDLTGRTILDVGCGSGYHMWRMIGAGAHLAVGIDPTQLFLCQFEAVRKLLGNDQRAHLLPLGIEQLPALKAFDTVFSMGVLYHRRSPLEHLWQLKDQLVNEGELVLETLVIDGDENTVLVPGDRYAQMRNVYFIPSALALKNWLKKCGFVDIRIADVSVTTTEEQRRTEWMVTESLADFLDPHDPGKTVEGYPAPKRAVLIARKP</sequence>
<accession>C4ZQF5</accession>
<keyword id="KW-0808">Transferase</keyword>
<keyword id="KW-0819">tRNA processing</keyword>
<organism>
    <name type="scientific">Escherichia coli (strain K12 / MC4100 / BW2952)</name>
    <dbReference type="NCBI Taxonomy" id="595496"/>
    <lineage>
        <taxon>Bacteria</taxon>
        <taxon>Pseudomonadati</taxon>
        <taxon>Pseudomonadota</taxon>
        <taxon>Gammaproteobacteria</taxon>
        <taxon>Enterobacterales</taxon>
        <taxon>Enterobacteriaceae</taxon>
        <taxon>Escherichia</taxon>
    </lineage>
</organism>
<evidence type="ECO:0000255" key="1">
    <source>
        <dbReference type="HAMAP-Rule" id="MF_01590"/>
    </source>
</evidence>
<feature type="chain" id="PRO_1000215641" description="tRNA U34 carboxymethyltransferase">
    <location>
        <begin position="1"/>
        <end position="323"/>
    </location>
</feature>
<feature type="binding site" evidence="1">
    <location>
        <position position="91"/>
    </location>
    <ligand>
        <name>carboxy-S-adenosyl-L-methionine</name>
        <dbReference type="ChEBI" id="CHEBI:134278"/>
    </ligand>
</feature>
<feature type="binding site" evidence="1">
    <location>
        <position position="105"/>
    </location>
    <ligand>
        <name>carboxy-S-adenosyl-L-methionine</name>
        <dbReference type="ChEBI" id="CHEBI:134278"/>
    </ligand>
</feature>
<feature type="binding site" evidence="1">
    <location>
        <position position="110"/>
    </location>
    <ligand>
        <name>carboxy-S-adenosyl-L-methionine</name>
        <dbReference type="ChEBI" id="CHEBI:134278"/>
    </ligand>
</feature>
<feature type="binding site" evidence="1">
    <location>
        <position position="130"/>
    </location>
    <ligand>
        <name>carboxy-S-adenosyl-L-methionine</name>
        <dbReference type="ChEBI" id="CHEBI:134278"/>
    </ligand>
</feature>
<feature type="binding site" evidence="1">
    <location>
        <begin position="152"/>
        <end position="154"/>
    </location>
    <ligand>
        <name>carboxy-S-adenosyl-L-methionine</name>
        <dbReference type="ChEBI" id="CHEBI:134278"/>
    </ligand>
</feature>
<feature type="binding site" evidence="1">
    <location>
        <begin position="181"/>
        <end position="182"/>
    </location>
    <ligand>
        <name>carboxy-S-adenosyl-L-methionine</name>
        <dbReference type="ChEBI" id="CHEBI:134278"/>
    </ligand>
</feature>
<feature type="binding site" evidence="1">
    <location>
        <position position="196"/>
    </location>
    <ligand>
        <name>carboxy-S-adenosyl-L-methionine</name>
        <dbReference type="ChEBI" id="CHEBI:134278"/>
    </ligand>
</feature>
<feature type="binding site" evidence="1">
    <location>
        <position position="200"/>
    </location>
    <ligand>
        <name>carboxy-S-adenosyl-L-methionine</name>
        <dbReference type="ChEBI" id="CHEBI:134278"/>
    </ligand>
</feature>
<feature type="binding site" evidence="1">
    <location>
        <position position="315"/>
    </location>
    <ligand>
        <name>carboxy-S-adenosyl-L-methionine</name>
        <dbReference type="ChEBI" id="CHEBI:134278"/>
    </ligand>
</feature>
<name>CMOB_ECOBW</name>
<proteinExistence type="inferred from homology"/>
<reference key="1">
    <citation type="journal article" date="2009" name="J. Bacteriol.">
        <title>Genomic sequencing reveals regulatory mutations and recombinational events in the widely used MC4100 lineage of Escherichia coli K-12.</title>
        <authorList>
            <person name="Ferenci T."/>
            <person name="Zhou Z."/>
            <person name="Betteridge T."/>
            <person name="Ren Y."/>
            <person name="Liu Y."/>
            <person name="Feng L."/>
            <person name="Reeves P.R."/>
            <person name="Wang L."/>
        </authorList>
    </citation>
    <scope>NUCLEOTIDE SEQUENCE [LARGE SCALE GENOMIC DNA]</scope>
    <source>
        <strain>K12 / MC4100 / BW2952</strain>
    </source>
</reference>
<gene>
    <name evidence="1" type="primary">cmoB</name>
    <name type="ordered locus">BWG_1685</name>
</gene>
<comment type="function">
    <text evidence="1">Catalyzes carboxymethyl transfer from carboxy-S-adenosyl-L-methionine (Cx-SAM) to 5-hydroxyuridine (ho5U) to form 5-carboxymethoxyuridine (cmo5U) at position 34 in tRNAs.</text>
</comment>
<comment type="catalytic activity">
    <reaction evidence="1">
        <text>carboxy-S-adenosyl-L-methionine + 5-hydroxyuridine(34) in tRNA = 5-carboxymethoxyuridine(34) in tRNA + S-adenosyl-L-homocysteine + H(+)</text>
        <dbReference type="Rhea" id="RHEA:52848"/>
        <dbReference type="Rhea" id="RHEA-COMP:13381"/>
        <dbReference type="Rhea" id="RHEA-COMP:13383"/>
        <dbReference type="ChEBI" id="CHEBI:15378"/>
        <dbReference type="ChEBI" id="CHEBI:57856"/>
        <dbReference type="ChEBI" id="CHEBI:134278"/>
        <dbReference type="ChEBI" id="CHEBI:136877"/>
        <dbReference type="ChEBI" id="CHEBI:136879"/>
    </reaction>
</comment>
<comment type="subunit">
    <text evidence="1">Homotetramer.</text>
</comment>
<comment type="similarity">
    <text evidence="1">Belongs to the class I-like SAM-binding methyltransferase superfamily. CmoB family.</text>
</comment>
<dbReference type="EC" id="2.5.1.-" evidence="1"/>
<dbReference type="EMBL" id="CP001396">
    <property type="protein sequence ID" value="ACR65089.1"/>
    <property type="molecule type" value="Genomic_DNA"/>
</dbReference>
<dbReference type="RefSeq" id="WP_000564725.1">
    <property type="nucleotide sequence ID" value="NC_012759.1"/>
</dbReference>
<dbReference type="SMR" id="C4ZQF5"/>
<dbReference type="GeneID" id="75171943"/>
<dbReference type="KEGG" id="ebw:BWG_1685"/>
<dbReference type="HOGENOM" id="CLU_052665_0_0_6"/>
<dbReference type="GO" id="GO:0016765">
    <property type="term" value="F:transferase activity, transferring alkyl or aryl (other than methyl) groups"/>
    <property type="evidence" value="ECO:0007669"/>
    <property type="project" value="UniProtKB-UniRule"/>
</dbReference>
<dbReference type="GO" id="GO:0002098">
    <property type="term" value="P:tRNA wobble uridine modification"/>
    <property type="evidence" value="ECO:0007669"/>
    <property type="project" value="InterPro"/>
</dbReference>
<dbReference type="CDD" id="cd02440">
    <property type="entry name" value="AdoMet_MTases"/>
    <property type="match status" value="1"/>
</dbReference>
<dbReference type="FunFam" id="3.40.50.150:FF:000080">
    <property type="entry name" value="tRNA U34 carboxymethyltransferase"/>
    <property type="match status" value="1"/>
</dbReference>
<dbReference type="Gene3D" id="3.40.50.150">
    <property type="entry name" value="Vaccinia Virus protein VP39"/>
    <property type="match status" value="1"/>
</dbReference>
<dbReference type="HAMAP" id="MF_01590">
    <property type="entry name" value="tRNA_carboxymethyltr_CmoB"/>
    <property type="match status" value="1"/>
</dbReference>
<dbReference type="InterPro" id="IPR010017">
    <property type="entry name" value="CmoB"/>
</dbReference>
<dbReference type="InterPro" id="IPR027555">
    <property type="entry name" value="Mo5U34_MeTrfas-like"/>
</dbReference>
<dbReference type="InterPro" id="IPR029063">
    <property type="entry name" value="SAM-dependent_MTases_sf"/>
</dbReference>
<dbReference type="NCBIfam" id="NF011650">
    <property type="entry name" value="PRK15068.1"/>
    <property type="match status" value="1"/>
</dbReference>
<dbReference type="NCBIfam" id="TIGR00452">
    <property type="entry name" value="tRNA 5-methoxyuridine(34)/uridine 5-oxyacetic acid(34) synthase CmoB"/>
    <property type="match status" value="1"/>
</dbReference>
<dbReference type="PANTHER" id="PTHR43861">
    <property type="entry name" value="TRANS-ACONITATE 2-METHYLTRANSFERASE-RELATED"/>
    <property type="match status" value="1"/>
</dbReference>
<dbReference type="Pfam" id="PF08003">
    <property type="entry name" value="Methyltransf_9"/>
    <property type="match status" value="1"/>
</dbReference>
<dbReference type="SUPFAM" id="SSF53335">
    <property type="entry name" value="S-adenosyl-L-methionine-dependent methyltransferases"/>
    <property type="match status" value="1"/>
</dbReference>